<sequence length="226" mass="25035">MKAIKIAIDGPASSGKSTVAKIIAKNLGYTYLDTGAMYRSATYIALTHGYTGKEVALILEELEKNPIFFKKAKDGSQLVFLGDEDVTLAIRQNDVTNNVSWISALPEIREELVHQQRRIAQAGGIIMDGRDIGTVVLPDAELKIFLVASVEERAERRYKENLEKGIESDFETLKEEIAARDYKDSHRKVSPLKAAEDALIFDTTGVSIDGVVQFIQEKAEKIVDMS</sequence>
<feature type="chain" id="PRO_1000048295" description="Cytidylate kinase">
    <location>
        <begin position="1"/>
        <end position="226"/>
    </location>
</feature>
<feature type="binding site" evidence="1">
    <location>
        <begin position="10"/>
        <end position="18"/>
    </location>
    <ligand>
        <name>ATP</name>
        <dbReference type="ChEBI" id="CHEBI:30616"/>
    </ligand>
</feature>
<accession>Q1JCH3</accession>
<name>KCY_STRPB</name>
<evidence type="ECO:0000255" key="1">
    <source>
        <dbReference type="HAMAP-Rule" id="MF_00238"/>
    </source>
</evidence>
<dbReference type="EC" id="2.7.4.25" evidence="1"/>
<dbReference type="EMBL" id="CP000261">
    <property type="protein sequence ID" value="ABF35735.1"/>
    <property type="molecule type" value="Genomic_DNA"/>
</dbReference>
<dbReference type="SMR" id="Q1JCH3"/>
<dbReference type="KEGG" id="spj:MGAS2096_Spy0683"/>
<dbReference type="HOGENOM" id="CLU_079959_0_2_9"/>
<dbReference type="GO" id="GO:0005829">
    <property type="term" value="C:cytosol"/>
    <property type="evidence" value="ECO:0007669"/>
    <property type="project" value="TreeGrafter"/>
</dbReference>
<dbReference type="GO" id="GO:0005524">
    <property type="term" value="F:ATP binding"/>
    <property type="evidence" value="ECO:0007669"/>
    <property type="project" value="UniProtKB-UniRule"/>
</dbReference>
<dbReference type="GO" id="GO:0036430">
    <property type="term" value="F:CMP kinase activity"/>
    <property type="evidence" value="ECO:0007669"/>
    <property type="project" value="RHEA"/>
</dbReference>
<dbReference type="GO" id="GO:0036431">
    <property type="term" value="F:dCMP kinase activity"/>
    <property type="evidence" value="ECO:0007669"/>
    <property type="project" value="RHEA"/>
</dbReference>
<dbReference type="GO" id="GO:0015949">
    <property type="term" value="P:nucleobase-containing small molecule interconversion"/>
    <property type="evidence" value="ECO:0007669"/>
    <property type="project" value="TreeGrafter"/>
</dbReference>
<dbReference type="GO" id="GO:0006220">
    <property type="term" value="P:pyrimidine nucleotide metabolic process"/>
    <property type="evidence" value="ECO:0007669"/>
    <property type="project" value="UniProtKB-UniRule"/>
</dbReference>
<dbReference type="CDD" id="cd02020">
    <property type="entry name" value="CMPK"/>
    <property type="match status" value="1"/>
</dbReference>
<dbReference type="FunFam" id="3.40.50.300:FF:000484">
    <property type="entry name" value="Cytidylate kinase"/>
    <property type="match status" value="1"/>
</dbReference>
<dbReference type="Gene3D" id="3.40.50.300">
    <property type="entry name" value="P-loop containing nucleotide triphosphate hydrolases"/>
    <property type="match status" value="1"/>
</dbReference>
<dbReference type="HAMAP" id="MF_00238">
    <property type="entry name" value="Cytidyl_kinase_type1"/>
    <property type="match status" value="1"/>
</dbReference>
<dbReference type="InterPro" id="IPR003136">
    <property type="entry name" value="Cytidylate_kin"/>
</dbReference>
<dbReference type="InterPro" id="IPR011994">
    <property type="entry name" value="Cytidylate_kinase_dom"/>
</dbReference>
<dbReference type="InterPro" id="IPR027417">
    <property type="entry name" value="P-loop_NTPase"/>
</dbReference>
<dbReference type="NCBIfam" id="TIGR00017">
    <property type="entry name" value="cmk"/>
    <property type="match status" value="1"/>
</dbReference>
<dbReference type="PANTHER" id="PTHR21299:SF2">
    <property type="entry name" value="CYTIDYLATE KINASE"/>
    <property type="match status" value="1"/>
</dbReference>
<dbReference type="PANTHER" id="PTHR21299">
    <property type="entry name" value="CYTIDYLATE KINASE/PANTOATE-BETA-ALANINE LIGASE"/>
    <property type="match status" value="1"/>
</dbReference>
<dbReference type="Pfam" id="PF02224">
    <property type="entry name" value="Cytidylate_kin"/>
    <property type="match status" value="1"/>
</dbReference>
<dbReference type="SUPFAM" id="SSF52540">
    <property type="entry name" value="P-loop containing nucleoside triphosphate hydrolases"/>
    <property type="match status" value="1"/>
</dbReference>
<proteinExistence type="inferred from homology"/>
<protein>
    <recommendedName>
        <fullName evidence="1">Cytidylate kinase</fullName>
        <shortName evidence="1">CK</shortName>
        <ecNumber evidence="1">2.7.4.25</ecNumber>
    </recommendedName>
    <alternativeName>
        <fullName evidence="1">Cytidine monophosphate kinase</fullName>
        <shortName evidence="1">CMP kinase</shortName>
    </alternativeName>
</protein>
<organism>
    <name type="scientific">Streptococcus pyogenes serotype M12 (strain MGAS2096)</name>
    <dbReference type="NCBI Taxonomy" id="370553"/>
    <lineage>
        <taxon>Bacteria</taxon>
        <taxon>Bacillati</taxon>
        <taxon>Bacillota</taxon>
        <taxon>Bacilli</taxon>
        <taxon>Lactobacillales</taxon>
        <taxon>Streptococcaceae</taxon>
        <taxon>Streptococcus</taxon>
    </lineage>
</organism>
<reference key="1">
    <citation type="journal article" date="2006" name="Proc. Natl. Acad. Sci. U.S.A.">
        <title>Molecular genetic anatomy of inter- and intraserotype variation in the human bacterial pathogen group A Streptococcus.</title>
        <authorList>
            <person name="Beres S.B."/>
            <person name="Richter E.W."/>
            <person name="Nagiec M.J."/>
            <person name="Sumby P."/>
            <person name="Porcella S.F."/>
            <person name="DeLeo F.R."/>
            <person name="Musser J.M."/>
        </authorList>
    </citation>
    <scope>NUCLEOTIDE SEQUENCE [LARGE SCALE GENOMIC DNA]</scope>
    <source>
        <strain>MGAS2096</strain>
    </source>
</reference>
<gene>
    <name evidence="1" type="primary">cmk</name>
    <name type="ordered locus">MGAS2096_Spy0683</name>
</gene>
<keyword id="KW-0067">ATP-binding</keyword>
<keyword id="KW-0963">Cytoplasm</keyword>
<keyword id="KW-0418">Kinase</keyword>
<keyword id="KW-0547">Nucleotide-binding</keyword>
<keyword id="KW-0808">Transferase</keyword>
<comment type="catalytic activity">
    <reaction evidence="1">
        <text>CMP + ATP = CDP + ADP</text>
        <dbReference type="Rhea" id="RHEA:11600"/>
        <dbReference type="ChEBI" id="CHEBI:30616"/>
        <dbReference type="ChEBI" id="CHEBI:58069"/>
        <dbReference type="ChEBI" id="CHEBI:60377"/>
        <dbReference type="ChEBI" id="CHEBI:456216"/>
        <dbReference type="EC" id="2.7.4.25"/>
    </reaction>
</comment>
<comment type="catalytic activity">
    <reaction evidence="1">
        <text>dCMP + ATP = dCDP + ADP</text>
        <dbReference type="Rhea" id="RHEA:25094"/>
        <dbReference type="ChEBI" id="CHEBI:30616"/>
        <dbReference type="ChEBI" id="CHEBI:57566"/>
        <dbReference type="ChEBI" id="CHEBI:58593"/>
        <dbReference type="ChEBI" id="CHEBI:456216"/>
        <dbReference type="EC" id="2.7.4.25"/>
    </reaction>
</comment>
<comment type="subcellular location">
    <subcellularLocation>
        <location evidence="1">Cytoplasm</location>
    </subcellularLocation>
</comment>
<comment type="similarity">
    <text evidence="1">Belongs to the cytidylate kinase family. Type 1 subfamily.</text>
</comment>